<protein>
    <recommendedName>
        <fullName evidence="6">FAD-binding monooxygenase ausB</fullName>
        <ecNumber evidence="8">1.14.13.-</ecNumber>
    </recommendedName>
    <alternativeName>
        <fullName evidence="6">Austinoid biosynthesis cluster protein B</fullName>
    </alternativeName>
</protein>
<proteinExistence type="inferred from homology"/>
<gene>
    <name evidence="6" type="primary">ausB</name>
    <name type="ORF">ASPCAL14372</name>
</gene>
<reference key="1">
    <citation type="journal article" date="2016" name="Genome Announc.">
        <title>Draft genome sequences of fungus Aspergillus calidoustus.</title>
        <authorList>
            <person name="Horn F."/>
            <person name="Linde J."/>
            <person name="Mattern D.J."/>
            <person name="Walther G."/>
            <person name="Guthke R."/>
            <person name="Scherlach K."/>
            <person name="Martin K."/>
            <person name="Brakhage A.A."/>
            <person name="Petzke L."/>
            <person name="Valiante V."/>
        </authorList>
    </citation>
    <scope>NUCLEOTIDE SEQUENCE [LARGE SCALE GENOMIC DNA]</scope>
    <source>
        <strain>SF006504</strain>
    </source>
</reference>
<reference key="2">
    <citation type="journal article" date="2017" name="ACS Chem. Biol.">
        <title>Discovery of an Extended Austinoid Biosynthetic Pathway in Aspergillus calidoustus.</title>
        <authorList>
            <person name="Valiante V."/>
            <person name="Mattern D.J."/>
            <person name="Schueffler A."/>
            <person name="Horn F."/>
            <person name="Walther G."/>
            <person name="Scherlach K."/>
            <person name="Petzke L."/>
            <person name="Dickhaut J."/>
            <person name="Guthke R."/>
            <person name="Hertweck C."/>
            <person name="Nett M."/>
            <person name="Thines E."/>
            <person name="Brakhage A.A."/>
        </authorList>
    </citation>
    <scope>FUNCTION</scope>
    <scope>PATHWAY</scope>
</reference>
<reference key="3">
    <citation type="journal article" date="2017" name="ACS Chem. Biol.">
        <title>Rewiring of the austinoid biosynthetic pathway in filamentous fungi.</title>
        <authorList>
            <person name="Mattern D.J."/>
            <person name="Valiante V."/>
            <person name="Horn F."/>
            <person name="Petzke L."/>
            <person name="Brakhage A.A."/>
        </authorList>
    </citation>
    <scope>FUNCTION</scope>
</reference>
<organism>
    <name type="scientific">Aspergillus calidoustus</name>
    <dbReference type="NCBI Taxonomy" id="454130"/>
    <lineage>
        <taxon>Eukaryota</taxon>
        <taxon>Fungi</taxon>
        <taxon>Dikarya</taxon>
        <taxon>Ascomycota</taxon>
        <taxon>Pezizomycotina</taxon>
        <taxon>Eurotiomycetes</taxon>
        <taxon>Eurotiomycetidae</taxon>
        <taxon>Eurotiales</taxon>
        <taxon>Aspergillaceae</taxon>
        <taxon>Aspergillus</taxon>
        <taxon>Aspergillus subgen. Nidulantes</taxon>
    </lineage>
</organism>
<feature type="chain" id="PRO_0000453846" description="FAD-binding monooxygenase ausB">
    <location>
        <begin position="1"/>
        <end position="632"/>
    </location>
</feature>
<feature type="region of interest" description="Disordered" evidence="3">
    <location>
        <begin position="1"/>
        <end position="50"/>
    </location>
</feature>
<feature type="compositionally biased region" description="Polar residues" evidence="3">
    <location>
        <begin position="15"/>
        <end position="24"/>
    </location>
</feature>
<feature type="compositionally biased region" description="Polar residues" evidence="3">
    <location>
        <begin position="31"/>
        <end position="43"/>
    </location>
</feature>
<feature type="binding site" evidence="1">
    <location>
        <begin position="116"/>
        <end position="119"/>
    </location>
    <ligand>
        <name>FAD</name>
        <dbReference type="ChEBI" id="CHEBI:57692"/>
    </ligand>
</feature>
<feature type="binding site" evidence="1">
    <location>
        <begin position="126"/>
        <end position="128"/>
    </location>
    <ligand>
        <name>NADP(+)</name>
        <dbReference type="ChEBI" id="CHEBI:58349"/>
    </ligand>
</feature>
<feature type="binding site" evidence="1">
    <location>
        <begin position="128"/>
        <end position="129"/>
    </location>
    <ligand>
        <name>FAD</name>
        <dbReference type="ChEBI" id="CHEBI:57692"/>
    </ligand>
</feature>
<feature type="binding site" evidence="1">
    <location>
        <position position="134"/>
    </location>
    <ligand>
        <name>FAD</name>
        <dbReference type="ChEBI" id="CHEBI:57692"/>
    </ligand>
</feature>
<feature type="binding site" evidence="1">
    <location>
        <begin position="269"/>
        <end position="275"/>
    </location>
    <ligand>
        <name>NADP(+)</name>
        <dbReference type="ChEBI" id="CHEBI:58349"/>
    </ligand>
</feature>
<feature type="binding site" evidence="1">
    <location>
        <begin position="292"/>
        <end position="293"/>
    </location>
    <ligand>
        <name>NADP(+)</name>
        <dbReference type="ChEBI" id="CHEBI:58349"/>
    </ligand>
</feature>
<feature type="site" description="Transition state stabilizer" evidence="1">
    <location>
        <position position="413"/>
    </location>
</feature>
<accession>A0A0U4ZPL6</accession>
<keyword id="KW-0274">FAD</keyword>
<keyword id="KW-0285">Flavoprotein</keyword>
<keyword id="KW-0503">Monooxygenase</keyword>
<keyword id="KW-0521">NADP</keyword>
<keyword id="KW-0560">Oxidoreductase</keyword>
<keyword id="KW-1185">Reference proteome</keyword>
<sequence>MASAPEVESVKTPDPASTKTQHTSIAEIHTADQTWNNESNTRLPPNHRHHLRDTRYDPWTHNGSPPAEISKIPPRAKVLILGAGYGGLLFAVRLLEAGFQPSDILLVDAAHGFGGTWYWNRYPGLMCDIESYIYMPLLEETGYIPSAKYVPGEELRSHAERIAQHWGLGTRTGFGVRVEELRWDEKGIRWDVRGGRTQDPTMRWTCTADFVIIATGTLNRPRVPDLAGLDMFTGHVFHTARWDYNYTGGAPGTPALPRLDGKRVAVIGTGSTAIQIIPQLAKSAEQLFVFQRTPASVGLQRNRPTDREWWEKTIQNAAPGWQRRRAENFNAWISTPHEVLGIEEDLISDGWTSAPSFAAAIGGPLNLAPDFLHRATEVDAARRRIVHQVIETTVKDRRTAEALLNHAHGWCKRPCFHEGYFETYNLANTLLVDARDHQLHLTHDGVQVGDTVYPVDLIVLATGYELGSLCPATRAQVRIVGVGGQQMEEKWARPATLHGIMTRGFPNLFFPGTSQAGVTANQSYMFDRAAEHVAYILHALCLRRGTETRLRLQPTVEAEEQWATRSVDQARAFAATRACAVGSYTIAARYESADGAALARHLPWGEGMASYVRVLEQWREAGTMEGLEIVSE</sequence>
<evidence type="ECO:0000250" key="1">
    <source>
        <dbReference type="UniProtKB" id="H3JQW0"/>
    </source>
</evidence>
<evidence type="ECO:0000250" key="2">
    <source>
        <dbReference type="UniProtKB" id="Q5ATK1"/>
    </source>
</evidence>
<evidence type="ECO:0000256" key="3">
    <source>
        <dbReference type="SAM" id="MobiDB-lite"/>
    </source>
</evidence>
<evidence type="ECO:0000269" key="4">
    <source>
    </source>
</evidence>
<evidence type="ECO:0000269" key="5">
    <source>
    </source>
</evidence>
<evidence type="ECO:0000303" key="6">
    <source>
    </source>
</evidence>
<evidence type="ECO:0000305" key="7"/>
<evidence type="ECO:0000305" key="8">
    <source>
    </source>
</evidence>
<evidence type="ECO:0000305" key="9">
    <source>
    </source>
</evidence>
<comment type="function">
    <text evidence="2 4 5">FAD-binding monooxygenase; part of the gene cluster that mediates the biosynthesis of calidodehydroaustin, a fungal meroterpenoid (PubMed:28233494, PubMed:29076725). The first step of the pathway is the synthesis of 3,5-dimethylorsellinic acid by the polyketide synthase ausA (PubMed:28233494). 3,5-dimethylorsellinic acid is then prenylated by the polyprenyl transferase ausN (PubMed:28233494). Further epoxidation by the FAD-dependent monooxygenase ausM and cyclization by the probable terpene cyclase ausL lead to the formation of protoaustinoid A (By similarity). Protoaustinoid A is then oxidized to spiro-lactone preaustinoid A3 by the combined action of the FAD-binding monooxygenases ausB and ausC, and the dioxygenase ausE (By similarity). Acid-catalyzed keto-rearrangement and ring contraction of the tetraketide portion of preaustinoid A3 by ausJ lead to the formation of preaustinoid A4 (By similarity). The aldo-keto reductase ausK, with the help of ausH, is involved in the next step by transforming preaustinoid A4 into isoaustinone which is in turn hydroxylated by the P450 monooxygenase ausI to form austinolide (By similarity). The cytochrome P450 monooxygenase ausG modifies austinolide to austinol (By similarity). Austinol is further acetylated to austin by the O-acetyltransferase ausP, which spontaneously changes to dehydroaustin (PubMed:28233494). The cytochrome P450 monooxygenase ausR then converts dehydroaustin is into 7-dehydrodehydroaustin (PubMed:28233494). The hydroxylation catalyzed by ausR permits the O-acetyltransferase ausQ to add an additional acetyl group to the molecule, leading to the formation of acetoxydehydroaustin (PubMed:28233494). The short chain dehydrogenase ausT catalyzes the reduction of the double bond present between carbon atoms 1 and 2 to convert 7-dehydrodehydroaustin into 1,2-dihydro-7-hydroxydehydroaustin (PubMed:28233494). AusQ catalyzes not only an acetylation reaction but also the addition of the PKS ausV diketide product to 1,2-dihydro-7-hydroxydehydroaustin, forming precalidodehydroaustin (PubMed:28233494). Finally, the iron/alpha-ketoglutarate-dependent dioxygenase converts precalidodehydroaustin into calidodehydroaustin (PubMed:28233494).</text>
</comment>
<comment type="catalytic activity">
    <reaction evidence="2">
        <text>protoaustinoid A + AH2 + O2 = berkeleyone A + A + H2O</text>
        <dbReference type="Rhea" id="RHEA:65140"/>
        <dbReference type="ChEBI" id="CHEBI:13193"/>
        <dbReference type="ChEBI" id="CHEBI:15377"/>
        <dbReference type="ChEBI" id="CHEBI:15379"/>
        <dbReference type="ChEBI" id="CHEBI:17499"/>
        <dbReference type="ChEBI" id="CHEBI:69024"/>
        <dbReference type="ChEBI" id="CHEBI:156350"/>
    </reaction>
    <physiologicalReaction direction="left-to-right" evidence="2">
        <dbReference type="Rhea" id="RHEA:65141"/>
    </physiologicalReaction>
</comment>
<comment type="cofactor">
    <cofactor evidence="1">
        <name>FAD</name>
        <dbReference type="ChEBI" id="CHEBI:57692"/>
    </cofactor>
    <text evidence="1">Binds 1 FAD per subunit.</text>
</comment>
<comment type="pathway">
    <text evidence="8">Secondary metabolite biosynthesis; terpenoid biosynthesis.</text>
</comment>
<comment type="miscellaneous">
    <text evidence="9">In A.calidoustus, the austinoid gene cluster lies on a contiguous DNA region, while clusters from E.nidulans and P.brasilianum are split in their respective genomes. Genetic rearrangements provoked variability among the clusters and E.nidulans produces the least number of austionoid derivatives with the end products austinol and dehydroaustinol, while P.brasilianum can produce until acetoxydehydroaustin, and A.calidoustus produces the highest number of identified derivatives.</text>
</comment>
<comment type="similarity">
    <text evidence="7">Belongs to the FAD-binding monooxygenase family.</text>
</comment>
<name>AUSB_ASPCI</name>
<dbReference type="EC" id="1.14.13.-" evidence="8"/>
<dbReference type="EMBL" id="CDMC01000024">
    <property type="protein sequence ID" value="CEL11269.1"/>
    <property type="molecule type" value="Genomic_DNA"/>
</dbReference>
<dbReference type="SMR" id="A0A0U4ZPL6"/>
<dbReference type="STRING" id="454130.A0A0U4ZPL6"/>
<dbReference type="OMA" id="TANQSYM"/>
<dbReference type="OrthoDB" id="66881at2759"/>
<dbReference type="UniPathway" id="UPA00213"/>
<dbReference type="Proteomes" id="UP000054771">
    <property type="component" value="Unassembled WGS sequence"/>
</dbReference>
<dbReference type="GO" id="GO:0050660">
    <property type="term" value="F:flavin adenine dinucleotide binding"/>
    <property type="evidence" value="ECO:0007669"/>
    <property type="project" value="InterPro"/>
</dbReference>
<dbReference type="GO" id="GO:0004499">
    <property type="term" value="F:N,N-dimethylaniline monooxygenase activity"/>
    <property type="evidence" value="ECO:0007669"/>
    <property type="project" value="InterPro"/>
</dbReference>
<dbReference type="GO" id="GO:0050661">
    <property type="term" value="F:NADP binding"/>
    <property type="evidence" value="ECO:0007669"/>
    <property type="project" value="InterPro"/>
</dbReference>
<dbReference type="GO" id="GO:0016114">
    <property type="term" value="P:terpenoid biosynthetic process"/>
    <property type="evidence" value="ECO:0007669"/>
    <property type="project" value="UniProtKB-UniPathway"/>
</dbReference>
<dbReference type="Gene3D" id="3.50.50.60">
    <property type="entry name" value="FAD/NAD(P)-binding domain"/>
    <property type="match status" value="2"/>
</dbReference>
<dbReference type="InterPro" id="IPR050775">
    <property type="entry name" value="FAD-binding_Monooxygenases"/>
</dbReference>
<dbReference type="InterPro" id="IPR036188">
    <property type="entry name" value="FAD/NAD-bd_sf"/>
</dbReference>
<dbReference type="InterPro" id="IPR020946">
    <property type="entry name" value="Flavin_mOase-like"/>
</dbReference>
<dbReference type="PANTHER" id="PTHR43098:SF2">
    <property type="entry name" value="FAD-BINDING MONOOXYGENASE AUSB-RELATED"/>
    <property type="match status" value="1"/>
</dbReference>
<dbReference type="PANTHER" id="PTHR43098">
    <property type="entry name" value="L-ORNITHINE N(5)-MONOOXYGENASE-RELATED"/>
    <property type="match status" value="1"/>
</dbReference>
<dbReference type="Pfam" id="PF00743">
    <property type="entry name" value="FMO-like"/>
    <property type="match status" value="1"/>
</dbReference>
<dbReference type="Pfam" id="PF13450">
    <property type="entry name" value="NAD_binding_8"/>
    <property type="match status" value="1"/>
</dbReference>
<dbReference type="SUPFAM" id="SSF51905">
    <property type="entry name" value="FAD/NAD(P)-binding domain"/>
    <property type="match status" value="2"/>
</dbReference>